<proteinExistence type="inferred from homology"/>
<dbReference type="EC" id="5.3.1.28" evidence="1"/>
<dbReference type="EMBL" id="CP000607">
    <property type="protein sequence ID" value="ABP37643.1"/>
    <property type="molecule type" value="Genomic_DNA"/>
</dbReference>
<dbReference type="SMR" id="A4SGN4"/>
<dbReference type="STRING" id="290318.Cvib_1633"/>
<dbReference type="KEGG" id="pvi:Cvib_1633"/>
<dbReference type="eggNOG" id="COG0279">
    <property type="taxonomic scope" value="Bacteria"/>
</dbReference>
<dbReference type="HOGENOM" id="CLU_080999_4_0_10"/>
<dbReference type="OrthoDB" id="9781311at2"/>
<dbReference type="UniPathway" id="UPA00041">
    <property type="reaction ID" value="UER00436"/>
</dbReference>
<dbReference type="GO" id="GO:0005737">
    <property type="term" value="C:cytoplasm"/>
    <property type="evidence" value="ECO:0007669"/>
    <property type="project" value="UniProtKB-SubCell"/>
</dbReference>
<dbReference type="GO" id="GO:0097367">
    <property type="term" value="F:carbohydrate derivative binding"/>
    <property type="evidence" value="ECO:0007669"/>
    <property type="project" value="InterPro"/>
</dbReference>
<dbReference type="GO" id="GO:0008968">
    <property type="term" value="F:D-sedoheptulose 7-phosphate isomerase activity"/>
    <property type="evidence" value="ECO:0007669"/>
    <property type="project" value="UniProtKB-UniRule"/>
</dbReference>
<dbReference type="GO" id="GO:0008270">
    <property type="term" value="F:zinc ion binding"/>
    <property type="evidence" value="ECO:0007669"/>
    <property type="project" value="UniProtKB-UniRule"/>
</dbReference>
<dbReference type="GO" id="GO:0005975">
    <property type="term" value="P:carbohydrate metabolic process"/>
    <property type="evidence" value="ECO:0007669"/>
    <property type="project" value="UniProtKB-UniRule"/>
</dbReference>
<dbReference type="GO" id="GO:2001061">
    <property type="term" value="P:D-glycero-D-manno-heptose 7-phosphate biosynthetic process"/>
    <property type="evidence" value="ECO:0007669"/>
    <property type="project" value="UniProtKB-UniPathway"/>
</dbReference>
<dbReference type="CDD" id="cd05006">
    <property type="entry name" value="SIS_GmhA"/>
    <property type="match status" value="1"/>
</dbReference>
<dbReference type="Gene3D" id="3.40.50.10490">
    <property type="entry name" value="Glucose-6-phosphate isomerase like protein, domain 1"/>
    <property type="match status" value="1"/>
</dbReference>
<dbReference type="HAMAP" id="MF_00067">
    <property type="entry name" value="GmhA"/>
    <property type="match status" value="1"/>
</dbReference>
<dbReference type="InterPro" id="IPR035461">
    <property type="entry name" value="GmhA/DiaA"/>
</dbReference>
<dbReference type="InterPro" id="IPR004515">
    <property type="entry name" value="Phosphoheptose_Isoase"/>
</dbReference>
<dbReference type="InterPro" id="IPR001347">
    <property type="entry name" value="SIS_dom"/>
</dbReference>
<dbReference type="InterPro" id="IPR046348">
    <property type="entry name" value="SIS_dom_sf"/>
</dbReference>
<dbReference type="InterPro" id="IPR050099">
    <property type="entry name" value="SIS_GmhA/DiaA_subfam"/>
</dbReference>
<dbReference type="PANTHER" id="PTHR30390">
    <property type="entry name" value="SEDOHEPTULOSE 7-PHOSPHATE ISOMERASE / DNAA INITIATOR-ASSOCIATING FACTOR FOR REPLICATION INITIATION"/>
    <property type="match status" value="1"/>
</dbReference>
<dbReference type="Pfam" id="PF13580">
    <property type="entry name" value="SIS_2"/>
    <property type="match status" value="1"/>
</dbReference>
<dbReference type="SUPFAM" id="SSF53697">
    <property type="entry name" value="SIS domain"/>
    <property type="match status" value="1"/>
</dbReference>
<dbReference type="PROSITE" id="PS51464">
    <property type="entry name" value="SIS"/>
    <property type="match status" value="1"/>
</dbReference>
<sequence>MEEQGRCACRLEDRPHYEEMVLETMLYSARLKERVARENSAVIVAMSRLMAETFEGGGRVLFCGNGGSAADAQHLATELTIRYRSSVQRPALAAIALSSDSMALTAGANDLGYDAVFARLVEAYGREGDLLVGISTSGNSQSVANAFMAAQERGLKCIALLGGDGGAMKGKADLEIVVPHTGSADRVQECHIAIGHVIIDLVERMLGYCTSSR</sequence>
<reference key="1">
    <citation type="submission" date="2007-03" db="EMBL/GenBank/DDBJ databases">
        <title>Complete sequence of Prosthecochloris vibrioformis DSM 265.</title>
        <authorList>
            <consortium name="US DOE Joint Genome Institute"/>
            <person name="Copeland A."/>
            <person name="Lucas S."/>
            <person name="Lapidus A."/>
            <person name="Barry K."/>
            <person name="Detter J.C."/>
            <person name="Glavina del Rio T."/>
            <person name="Hammon N."/>
            <person name="Israni S."/>
            <person name="Pitluck S."/>
            <person name="Schmutz J."/>
            <person name="Larimer F."/>
            <person name="Land M."/>
            <person name="Hauser L."/>
            <person name="Mikhailova N."/>
            <person name="Li T."/>
            <person name="Overmann J."/>
            <person name="Schuster S.C."/>
            <person name="Bryant D.A."/>
            <person name="Richardson P."/>
        </authorList>
    </citation>
    <scope>NUCLEOTIDE SEQUENCE [LARGE SCALE GENOMIC DNA]</scope>
    <source>
        <strain>DSM 265 / 1930</strain>
    </source>
</reference>
<evidence type="ECO:0000255" key="1">
    <source>
        <dbReference type="HAMAP-Rule" id="MF_00067"/>
    </source>
</evidence>
<name>GMHA_CHLPM</name>
<organism>
    <name type="scientific">Chlorobium phaeovibrioides (strain DSM 265 / 1930)</name>
    <name type="common">Prosthecochloris vibrioformis (strain DSM 265)</name>
    <dbReference type="NCBI Taxonomy" id="290318"/>
    <lineage>
        <taxon>Bacteria</taxon>
        <taxon>Pseudomonadati</taxon>
        <taxon>Chlorobiota</taxon>
        <taxon>Chlorobiia</taxon>
        <taxon>Chlorobiales</taxon>
        <taxon>Chlorobiaceae</taxon>
        <taxon>Chlorobium/Pelodictyon group</taxon>
        <taxon>Chlorobium</taxon>
    </lineage>
</organism>
<keyword id="KW-0119">Carbohydrate metabolism</keyword>
<keyword id="KW-0963">Cytoplasm</keyword>
<keyword id="KW-0413">Isomerase</keyword>
<keyword id="KW-0479">Metal-binding</keyword>
<keyword id="KW-0862">Zinc</keyword>
<feature type="chain" id="PRO_1000075100" description="Phosphoheptose isomerase">
    <location>
        <begin position="1"/>
        <end position="213"/>
    </location>
</feature>
<feature type="domain" description="SIS" evidence="1">
    <location>
        <begin position="50"/>
        <end position="208"/>
    </location>
</feature>
<feature type="binding site" evidence="1">
    <location>
        <begin position="65"/>
        <end position="67"/>
    </location>
    <ligand>
        <name>substrate</name>
    </ligand>
</feature>
<feature type="binding site" evidence="1">
    <location>
        <position position="74"/>
    </location>
    <ligand>
        <name>Zn(2+)</name>
        <dbReference type="ChEBI" id="CHEBI:29105"/>
    </ligand>
</feature>
<feature type="binding site" evidence="1">
    <location>
        <position position="78"/>
    </location>
    <ligand>
        <name>substrate</name>
    </ligand>
</feature>
<feature type="binding site" evidence="1">
    <location>
        <position position="78"/>
    </location>
    <ligand>
        <name>Zn(2+)</name>
        <dbReference type="ChEBI" id="CHEBI:29105"/>
    </ligand>
</feature>
<feature type="binding site" evidence="1">
    <location>
        <begin position="109"/>
        <end position="110"/>
    </location>
    <ligand>
        <name>substrate</name>
    </ligand>
</feature>
<feature type="binding site" evidence="1">
    <location>
        <begin position="135"/>
        <end position="137"/>
    </location>
    <ligand>
        <name>substrate</name>
    </ligand>
</feature>
<feature type="binding site" evidence="1">
    <location>
        <position position="140"/>
    </location>
    <ligand>
        <name>substrate</name>
    </ligand>
</feature>
<feature type="binding site" evidence="1">
    <location>
        <position position="188"/>
    </location>
    <ligand>
        <name>substrate</name>
    </ligand>
</feature>
<feature type="binding site" evidence="1">
    <location>
        <position position="188"/>
    </location>
    <ligand>
        <name>Zn(2+)</name>
        <dbReference type="ChEBI" id="CHEBI:29105"/>
    </ligand>
</feature>
<feature type="binding site" evidence="1">
    <location>
        <position position="196"/>
    </location>
    <ligand>
        <name>Zn(2+)</name>
        <dbReference type="ChEBI" id="CHEBI:29105"/>
    </ligand>
</feature>
<gene>
    <name evidence="1" type="primary">gmhA</name>
    <name type="ordered locus">Cvib_1633</name>
</gene>
<comment type="function">
    <text evidence="1">Catalyzes the isomerization of sedoheptulose 7-phosphate in D-glycero-D-manno-heptose 7-phosphate.</text>
</comment>
<comment type="catalytic activity">
    <reaction evidence="1">
        <text>2 D-sedoheptulose 7-phosphate = D-glycero-alpha-D-manno-heptose 7-phosphate + D-glycero-beta-D-manno-heptose 7-phosphate</text>
        <dbReference type="Rhea" id="RHEA:27489"/>
        <dbReference type="ChEBI" id="CHEBI:57483"/>
        <dbReference type="ChEBI" id="CHEBI:60203"/>
        <dbReference type="ChEBI" id="CHEBI:60204"/>
        <dbReference type="EC" id="5.3.1.28"/>
    </reaction>
</comment>
<comment type="cofactor">
    <cofactor evidence="1">
        <name>Zn(2+)</name>
        <dbReference type="ChEBI" id="CHEBI:29105"/>
    </cofactor>
    <text evidence="1">Binds 1 zinc ion per subunit.</text>
</comment>
<comment type="pathway">
    <text evidence="1">Carbohydrate biosynthesis; D-glycero-D-manno-heptose 7-phosphate biosynthesis; D-glycero-alpha-D-manno-heptose 7-phosphate and D-glycero-beta-D-manno-heptose 7-phosphate from sedoheptulose 7-phosphate: step 1/1.</text>
</comment>
<comment type="subcellular location">
    <subcellularLocation>
        <location evidence="1">Cytoplasm</location>
    </subcellularLocation>
</comment>
<comment type="miscellaneous">
    <text evidence="1">The reaction produces a racemic mixture of D-glycero-alpha-D-manno-heptose 7-phosphate and D-glycero-beta-D-manno-heptose 7-phosphate.</text>
</comment>
<comment type="similarity">
    <text evidence="1">Belongs to the SIS family. GmhA subfamily.</text>
</comment>
<accession>A4SGN4</accession>
<protein>
    <recommendedName>
        <fullName evidence="1">Phosphoheptose isomerase</fullName>
        <ecNumber evidence="1">5.3.1.28</ecNumber>
    </recommendedName>
    <alternativeName>
        <fullName evidence="1">Sedoheptulose 7-phosphate isomerase</fullName>
    </alternativeName>
</protein>